<feature type="chain" id="PRO_1000184309" description="ATP synthase subunit c">
    <location>
        <begin position="1"/>
        <end position="82"/>
    </location>
</feature>
<feature type="transmembrane region" description="Helical" evidence="1">
    <location>
        <begin position="7"/>
        <end position="27"/>
    </location>
</feature>
<feature type="transmembrane region" description="Helical" evidence="1">
    <location>
        <begin position="53"/>
        <end position="73"/>
    </location>
</feature>
<feature type="site" description="Reversibly protonated during proton transport" evidence="1">
    <location>
        <position position="60"/>
    </location>
</feature>
<organism>
    <name type="scientific">Acidovorax sp. (strain JS42)</name>
    <dbReference type="NCBI Taxonomy" id="232721"/>
    <lineage>
        <taxon>Bacteria</taxon>
        <taxon>Pseudomonadati</taxon>
        <taxon>Pseudomonadota</taxon>
        <taxon>Betaproteobacteria</taxon>
        <taxon>Burkholderiales</taxon>
        <taxon>Comamonadaceae</taxon>
        <taxon>Acidovorax</taxon>
    </lineage>
</organism>
<reference key="1">
    <citation type="submission" date="2006-12" db="EMBL/GenBank/DDBJ databases">
        <title>Complete sequence of chromosome 1 of Acidovorax sp. JS42.</title>
        <authorList>
            <person name="Copeland A."/>
            <person name="Lucas S."/>
            <person name="Lapidus A."/>
            <person name="Barry K."/>
            <person name="Detter J.C."/>
            <person name="Glavina del Rio T."/>
            <person name="Dalin E."/>
            <person name="Tice H."/>
            <person name="Pitluck S."/>
            <person name="Chertkov O."/>
            <person name="Brettin T."/>
            <person name="Bruce D."/>
            <person name="Han C."/>
            <person name="Tapia R."/>
            <person name="Gilna P."/>
            <person name="Schmutz J."/>
            <person name="Larimer F."/>
            <person name="Land M."/>
            <person name="Hauser L."/>
            <person name="Kyrpides N."/>
            <person name="Kim E."/>
            <person name="Stahl D."/>
            <person name="Richardson P."/>
        </authorList>
    </citation>
    <scope>NUCLEOTIDE SEQUENCE [LARGE SCALE GENOMIC DNA]</scope>
    <source>
        <strain>JS42</strain>
    </source>
</reference>
<dbReference type="EMBL" id="CP000539">
    <property type="protein sequence ID" value="ABM40557.1"/>
    <property type="molecule type" value="Genomic_DNA"/>
</dbReference>
<dbReference type="SMR" id="A1W2T2"/>
<dbReference type="STRING" id="232721.Ajs_0303"/>
<dbReference type="KEGG" id="ajs:Ajs_0303"/>
<dbReference type="eggNOG" id="ENOG5032S3K">
    <property type="taxonomic scope" value="Bacteria"/>
</dbReference>
<dbReference type="HOGENOM" id="CLU_148047_1_0_4"/>
<dbReference type="Proteomes" id="UP000000645">
    <property type="component" value="Chromosome"/>
</dbReference>
<dbReference type="GO" id="GO:0005886">
    <property type="term" value="C:plasma membrane"/>
    <property type="evidence" value="ECO:0007669"/>
    <property type="project" value="UniProtKB-SubCell"/>
</dbReference>
<dbReference type="GO" id="GO:0045259">
    <property type="term" value="C:proton-transporting ATP synthase complex"/>
    <property type="evidence" value="ECO:0007669"/>
    <property type="project" value="UniProtKB-KW"/>
</dbReference>
<dbReference type="GO" id="GO:0033177">
    <property type="term" value="C:proton-transporting two-sector ATPase complex, proton-transporting domain"/>
    <property type="evidence" value="ECO:0007669"/>
    <property type="project" value="InterPro"/>
</dbReference>
<dbReference type="GO" id="GO:0008289">
    <property type="term" value="F:lipid binding"/>
    <property type="evidence" value="ECO:0007669"/>
    <property type="project" value="UniProtKB-KW"/>
</dbReference>
<dbReference type="GO" id="GO:0046933">
    <property type="term" value="F:proton-transporting ATP synthase activity, rotational mechanism"/>
    <property type="evidence" value="ECO:0007669"/>
    <property type="project" value="UniProtKB-UniRule"/>
</dbReference>
<dbReference type="CDD" id="cd18185">
    <property type="entry name" value="ATP-synt_Fo_c_ATPE"/>
    <property type="match status" value="1"/>
</dbReference>
<dbReference type="FunFam" id="1.20.20.10:FF:000002">
    <property type="entry name" value="ATP synthase subunit c"/>
    <property type="match status" value="1"/>
</dbReference>
<dbReference type="Gene3D" id="1.20.20.10">
    <property type="entry name" value="F1F0 ATP synthase subunit C"/>
    <property type="match status" value="1"/>
</dbReference>
<dbReference type="HAMAP" id="MF_01396">
    <property type="entry name" value="ATP_synth_c_bact"/>
    <property type="match status" value="1"/>
</dbReference>
<dbReference type="InterPro" id="IPR005953">
    <property type="entry name" value="ATP_synth_csu_bac/chlpt"/>
</dbReference>
<dbReference type="InterPro" id="IPR000454">
    <property type="entry name" value="ATP_synth_F0_csu"/>
</dbReference>
<dbReference type="InterPro" id="IPR020537">
    <property type="entry name" value="ATP_synth_F0_csu_DDCD_BS"/>
</dbReference>
<dbReference type="InterPro" id="IPR038662">
    <property type="entry name" value="ATP_synth_F0_csu_sf"/>
</dbReference>
<dbReference type="InterPro" id="IPR002379">
    <property type="entry name" value="ATPase_proteolipid_c-like_dom"/>
</dbReference>
<dbReference type="InterPro" id="IPR035921">
    <property type="entry name" value="F/V-ATP_Csub_sf"/>
</dbReference>
<dbReference type="NCBIfam" id="TIGR01260">
    <property type="entry name" value="ATP_synt_c"/>
    <property type="match status" value="1"/>
</dbReference>
<dbReference type="NCBIfam" id="NF005363">
    <property type="entry name" value="PRK06876.1"/>
    <property type="match status" value="1"/>
</dbReference>
<dbReference type="Pfam" id="PF00137">
    <property type="entry name" value="ATP-synt_C"/>
    <property type="match status" value="1"/>
</dbReference>
<dbReference type="PRINTS" id="PR00124">
    <property type="entry name" value="ATPASEC"/>
</dbReference>
<dbReference type="SUPFAM" id="SSF81333">
    <property type="entry name" value="F1F0 ATP synthase subunit C"/>
    <property type="match status" value="1"/>
</dbReference>
<dbReference type="PROSITE" id="PS00605">
    <property type="entry name" value="ATPASE_C"/>
    <property type="match status" value="1"/>
</dbReference>
<accession>A1W2T2</accession>
<sequence length="82" mass="8388">MENILGLVALACGLIVGLGAIGASIGIALMGGKFLESSARQPELINELQTKMFILAGLIDAAFLIGVAIALLFAFANPFVLA</sequence>
<comment type="function">
    <text evidence="1">F(1)F(0) ATP synthase produces ATP from ADP in the presence of a proton or sodium gradient. F-type ATPases consist of two structural domains, F(1) containing the extramembraneous catalytic core and F(0) containing the membrane proton channel, linked together by a central stalk and a peripheral stalk. During catalysis, ATP synthesis in the catalytic domain of F(1) is coupled via a rotary mechanism of the central stalk subunits to proton translocation.</text>
</comment>
<comment type="function">
    <text evidence="1">Key component of the F(0) channel; it plays a direct role in translocation across the membrane. A homomeric c-ring of between 10-14 subunits forms the central stalk rotor element with the F(1) delta and epsilon subunits.</text>
</comment>
<comment type="subunit">
    <text evidence="1">F-type ATPases have 2 components, F(1) - the catalytic core - and F(0) - the membrane proton channel. F(1) has five subunits: alpha(3), beta(3), gamma(1), delta(1), epsilon(1). F(0) has three main subunits: a(1), b(2) and c(10-14). The alpha and beta chains form an alternating ring which encloses part of the gamma chain. F(1) is attached to F(0) by a central stalk formed by the gamma and epsilon chains, while a peripheral stalk is formed by the delta and b chains.</text>
</comment>
<comment type="subcellular location">
    <subcellularLocation>
        <location evidence="1">Cell inner membrane</location>
        <topology evidence="1">Multi-pass membrane protein</topology>
    </subcellularLocation>
</comment>
<comment type="similarity">
    <text evidence="1">Belongs to the ATPase C chain family.</text>
</comment>
<name>ATPL_ACISJ</name>
<protein>
    <recommendedName>
        <fullName evidence="1">ATP synthase subunit c</fullName>
    </recommendedName>
    <alternativeName>
        <fullName evidence="1">ATP synthase F(0) sector subunit c</fullName>
    </alternativeName>
    <alternativeName>
        <fullName evidence="1">F-type ATPase subunit c</fullName>
        <shortName evidence="1">F-ATPase subunit c</shortName>
    </alternativeName>
    <alternativeName>
        <fullName evidence="1">Lipid-binding protein</fullName>
    </alternativeName>
</protein>
<proteinExistence type="inferred from homology"/>
<keyword id="KW-0066">ATP synthesis</keyword>
<keyword id="KW-0997">Cell inner membrane</keyword>
<keyword id="KW-1003">Cell membrane</keyword>
<keyword id="KW-0138">CF(0)</keyword>
<keyword id="KW-0375">Hydrogen ion transport</keyword>
<keyword id="KW-0406">Ion transport</keyword>
<keyword id="KW-0446">Lipid-binding</keyword>
<keyword id="KW-0472">Membrane</keyword>
<keyword id="KW-0812">Transmembrane</keyword>
<keyword id="KW-1133">Transmembrane helix</keyword>
<keyword id="KW-0813">Transport</keyword>
<gene>
    <name evidence="1" type="primary">atpE</name>
    <name type="ordered locus">Ajs_0303</name>
</gene>
<evidence type="ECO:0000255" key="1">
    <source>
        <dbReference type="HAMAP-Rule" id="MF_01396"/>
    </source>
</evidence>